<organism>
    <name type="scientific">Streptococcus pyogenes serotype M28 (strain MGAS6180)</name>
    <dbReference type="NCBI Taxonomy" id="319701"/>
    <lineage>
        <taxon>Bacteria</taxon>
        <taxon>Bacillati</taxon>
        <taxon>Bacillota</taxon>
        <taxon>Bacilli</taxon>
        <taxon>Lactobacillales</taxon>
        <taxon>Streptococcaceae</taxon>
        <taxon>Streptococcus</taxon>
    </lineage>
</organism>
<name>GLS24_STRPM</name>
<comment type="similarity">
    <text evidence="2">Belongs to the asp23 family.</text>
</comment>
<reference key="1">
    <citation type="journal article" date="2005" name="J. Infect. Dis.">
        <title>Genome sequence of a serotype M28 strain of group A Streptococcus: potential new insights into puerperal sepsis and bacterial disease specificity.</title>
        <authorList>
            <person name="Green N.M."/>
            <person name="Zhang S."/>
            <person name="Porcella S.F."/>
            <person name="Nagiec M.J."/>
            <person name="Barbian K.D."/>
            <person name="Beres S.B."/>
            <person name="Lefebvre R.B."/>
            <person name="Musser J.M."/>
        </authorList>
    </citation>
    <scope>NUCLEOTIDE SEQUENCE [LARGE SCALE GENOMIC DNA]</scope>
    <source>
        <strain>MGAS6180</strain>
    </source>
</reference>
<sequence length="179" mass="19944">MTETYIKNTSKDLTSAIRGQLTYDDKVIEKIVGLALENVDGLLGVNGGFFANLKDKLVNTESVRDGVNVEVGKKQVAVDLDIVAEYQKHVPTIYDSIKSIVEEEVKRMTDLDVIEVNVKVVDIKTKEQFEAEKVSLQDKVSDMARSTSEFTSHQVENVKASVDNGVEKLQDQKAEPRVK</sequence>
<dbReference type="EMBL" id="CP000056">
    <property type="protein sequence ID" value="AAX72058.1"/>
    <property type="molecule type" value="Genomic_DNA"/>
</dbReference>
<dbReference type="RefSeq" id="WP_002984475.1">
    <property type="nucleotide sequence ID" value="NC_007296.2"/>
</dbReference>
<dbReference type="KEGG" id="spb:M28_Spy0945"/>
<dbReference type="HOGENOM" id="CLU_113198_1_1_9"/>
<dbReference type="InterPro" id="IPR005531">
    <property type="entry name" value="Asp23"/>
</dbReference>
<dbReference type="PANTHER" id="PTHR34297:SF3">
    <property type="entry name" value="ALKALINE SHOCK PROTEIN 23"/>
    <property type="match status" value="1"/>
</dbReference>
<dbReference type="PANTHER" id="PTHR34297">
    <property type="entry name" value="HYPOTHETICAL CYTOSOLIC PROTEIN-RELATED"/>
    <property type="match status" value="1"/>
</dbReference>
<dbReference type="Pfam" id="PF03780">
    <property type="entry name" value="Asp23"/>
    <property type="match status" value="1"/>
</dbReference>
<gene>
    <name type="ordered locus">M28_Spy0945</name>
</gene>
<proteinExistence type="inferred from homology"/>
<evidence type="ECO:0000256" key="1">
    <source>
        <dbReference type="SAM" id="MobiDB-lite"/>
    </source>
</evidence>
<evidence type="ECO:0000305" key="2"/>
<accession>Q48TA2</accession>
<feature type="chain" id="PRO_0000228685" description="Stress response regulator gls24 homolog">
    <location>
        <begin position="1"/>
        <end position="179"/>
    </location>
</feature>
<feature type="region of interest" description="Disordered" evidence="1">
    <location>
        <begin position="147"/>
        <end position="179"/>
    </location>
</feature>
<feature type="compositionally biased region" description="Basic and acidic residues" evidence="1">
    <location>
        <begin position="165"/>
        <end position="179"/>
    </location>
</feature>
<protein>
    <recommendedName>
        <fullName>Stress response regulator gls24 homolog</fullName>
    </recommendedName>
</protein>